<feature type="chain" id="PRO_1000050610" description="Peptidase E">
    <location>
        <begin position="1"/>
        <end position="229"/>
    </location>
</feature>
<feature type="active site" description="Charge relay system" evidence="1">
    <location>
        <position position="120"/>
    </location>
</feature>
<feature type="active site" description="Charge relay system" evidence="1">
    <location>
        <position position="135"/>
    </location>
</feature>
<feature type="active site" description="Charge relay system" evidence="1">
    <location>
        <position position="157"/>
    </location>
</feature>
<keyword id="KW-0963">Cytoplasm</keyword>
<keyword id="KW-0224">Dipeptidase</keyword>
<keyword id="KW-0378">Hydrolase</keyword>
<keyword id="KW-0645">Protease</keyword>
<keyword id="KW-1185">Reference proteome</keyword>
<keyword id="KW-0720">Serine protease</keyword>
<gene>
    <name evidence="1" type="primary">pepE</name>
    <name type="ordered locus">CKO_03899</name>
</gene>
<dbReference type="EC" id="3.4.13.21" evidence="1"/>
<dbReference type="EMBL" id="CP000822">
    <property type="protein sequence ID" value="ABV14975.1"/>
    <property type="molecule type" value="Genomic_DNA"/>
</dbReference>
<dbReference type="RefSeq" id="WP_012134669.1">
    <property type="nucleotide sequence ID" value="NC_009792.1"/>
</dbReference>
<dbReference type="SMR" id="A8ANB2"/>
<dbReference type="STRING" id="290338.CKO_03899"/>
<dbReference type="MEROPS" id="S51.001"/>
<dbReference type="GeneID" id="45137564"/>
<dbReference type="KEGG" id="cko:CKO_03899"/>
<dbReference type="HOGENOM" id="CLU_071689_0_0_6"/>
<dbReference type="OrthoDB" id="3373764at2"/>
<dbReference type="Proteomes" id="UP000008148">
    <property type="component" value="Chromosome"/>
</dbReference>
<dbReference type="GO" id="GO:0005737">
    <property type="term" value="C:cytoplasm"/>
    <property type="evidence" value="ECO:0007669"/>
    <property type="project" value="UniProtKB-SubCell"/>
</dbReference>
<dbReference type="GO" id="GO:0016805">
    <property type="term" value="F:dipeptidase activity"/>
    <property type="evidence" value="ECO:0007669"/>
    <property type="project" value="UniProtKB-UniRule"/>
</dbReference>
<dbReference type="GO" id="GO:0008236">
    <property type="term" value="F:serine-type peptidase activity"/>
    <property type="evidence" value="ECO:0007669"/>
    <property type="project" value="UniProtKB-KW"/>
</dbReference>
<dbReference type="GO" id="GO:0006508">
    <property type="term" value="P:proteolysis"/>
    <property type="evidence" value="ECO:0007669"/>
    <property type="project" value="UniProtKB-UniRule"/>
</dbReference>
<dbReference type="CDD" id="cd03146">
    <property type="entry name" value="GAT1_Peptidase_E"/>
    <property type="match status" value="1"/>
</dbReference>
<dbReference type="FunFam" id="3.40.50.880:FF:000007">
    <property type="entry name" value="Peptidase E"/>
    <property type="match status" value="1"/>
</dbReference>
<dbReference type="Gene3D" id="3.40.50.880">
    <property type="match status" value="1"/>
</dbReference>
<dbReference type="HAMAP" id="MF_00510">
    <property type="entry name" value="Peptidase_E"/>
    <property type="match status" value="1"/>
</dbReference>
<dbReference type="InterPro" id="IPR029062">
    <property type="entry name" value="Class_I_gatase-like"/>
</dbReference>
<dbReference type="InterPro" id="IPR005320">
    <property type="entry name" value="Peptidase_S51"/>
</dbReference>
<dbReference type="InterPro" id="IPR023172">
    <property type="entry name" value="Peptidase_S51_dipeptidase-E"/>
</dbReference>
<dbReference type="NCBIfam" id="NF003642">
    <property type="entry name" value="PRK05282.1"/>
    <property type="match status" value="1"/>
</dbReference>
<dbReference type="PANTHER" id="PTHR20842:SF0">
    <property type="entry name" value="ALPHA-ASPARTYL DIPEPTIDASE"/>
    <property type="match status" value="1"/>
</dbReference>
<dbReference type="PANTHER" id="PTHR20842">
    <property type="entry name" value="PROTEASE S51 ALPHA-ASPARTYL DIPEPTIDASE"/>
    <property type="match status" value="1"/>
</dbReference>
<dbReference type="Pfam" id="PF03575">
    <property type="entry name" value="Peptidase_S51"/>
    <property type="match status" value="1"/>
</dbReference>
<dbReference type="SUPFAM" id="SSF52317">
    <property type="entry name" value="Class I glutamine amidotransferase-like"/>
    <property type="match status" value="1"/>
</dbReference>
<protein>
    <recommendedName>
        <fullName evidence="1">Peptidase E</fullName>
        <ecNumber evidence="1">3.4.13.21</ecNumber>
    </recommendedName>
    <alternativeName>
        <fullName evidence="1">Alpha-aspartyl dipeptidase</fullName>
    </alternativeName>
    <alternativeName>
        <fullName evidence="1">Asp-specific dipeptidase</fullName>
    </alternativeName>
    <alternativeName>
        <fullName evidence="1">Dipeptidase E</fullName>
    </alternativeName>
</protein>
<sequence>MELLLLSNSTLPGKAWLEHALPLVAEQLHGRRSAVFLPFAGVTQTWDDYTAKTAAVLAPLGVSVTGIHSVADPVAAIADAEVVIVGGGNTFQLLKESRERGLLAPIVAAVKRGALYIGWSAGANLACPTIRTTNDMPIVDPQGFDALGLFPLQINPHFTNALPEGHKGETREQRIRELLVVAPELTVIGLPEGNWIQVSKGQATLGGPNTTYVFNAGEEAVPLEAGHRF</sequence>
<reference key="1">
    <citation type="submission" date="2007-08" db="EMBL/GenBank/DDBJ databases">
        <authorList>
            <consortium name="The Citrobacter koseri Genome Sequencing Project"/>
            <person name="McClelland M."/>
            <person name="Sanderson E.K."/>
            <person name="Porwollik S."/>
            <person name="Spieth J."/>
            <person name="Clifton W.S."/>
            <person name="Latreille P."/>
            <person name="Courtney L."/>
            <person name="Wang C."/>
            <person name="Pepin K."/>
            <person name="Bhonagiri V."/>
            <person name="Nash W."/>
            <person name="Johnson M."/>
            <person name="Thiruvilangam P."/>
            <person name="Wilson R."/>
        </authorList>
    </citation>
    <scope>NUCLEOTIDE SEQUENCE [LARGE SCALE GENOMIC DNA]</scope>
    <source>
        <strain>ATCC BAA-895 / CDC 4225-83 / SGSC4696</strain>
    </source>
</reference>
<evidence type="ECO:0000255" key="1">
    <source>
        <dbReference type="HAMAP-Rule" id="MF_00510"/>
    </source>
</evidence>
<comment type="function">
    <text evidence="1">Hydrolyzes dipeptides containing N-terminal aspartate residues. May play a role in allowing the cell to use peptide aspartate to spare carbon otherwise required for the synthesis of the aspartate family of amino acids.</text>
</comment>
<comment type="catalytic activity">
    <reaction evidence="1">
        <text>Dipeptidase E catalyzes the hydrolysis of dipeptides Asp-|-Xaa. It does not act on peptides with N-terminal Glu, Asn or Gln, nor does it cleave isoaspartyl peptides.</text>
        <dbReference type="EC" id="3.4.13.21"/>
    </reaction>
</comment>
<comment type="subcellular location">
    <subcellularLocation>
        <location evidence="1">Cytoplasm</location>
    </subcellularLocation>
</comment>
<comment type="similarity">
    <text evidence="1">Belongs to the peptidase S51 family.</text>
</comment>
<name>PEPE_CITK8</name>
<proteinExistence type="inferred from homology"/>
<organism>
    <name type="scientific">Citrobacter koseri (strain ATCC BAA-895 / CDC 4225-83 / SGSC4696)</name>
    <dbReference type="NCBI Taxonomy" id="290338"/>
    <lineage>
        <taxon>Bacteria</taxon>
        <taxon>Pseudomonadati</taxon>
        <taxon>Pseudomonadota</taxon>
        <taxon>Gammaproteobacteria</taxon>
        <taxon>Enterobacterales</taxon>
        <taxon>Enterobacteriaceae</taxon>
        <taxon>Citrobacter</taxon>
    </lineage>
</organism>
<accession>A8ANB2</accession>